<evidence type="ECO:0000250" key="1"/>
<evidence type="ECO:0000269" key="2">
    <source>
    </source>
</evidence>
<evidence type="ECO:0000305" key="3"/>
<accession>P44350</accession>
<proteinExistence type="evidence at protein level"/>
<sequence>MALNLQDKQAIVAEVNEAAKGALSAVIADSRGVTVEKMTELRKSAREAGVTMRVVRNTLLRRAVEGTDYECLKDTFVGPTLIAFSNEHPGARARLFKEFAKANDKFEIKGAAFEGKIQDVEFLATLPTYEEAIARLMGTMKEAAAGKLARTFAALRDKLQEAA</sequence>
<dbReference type="EMBL" id="L42023">
    <property type="protein sequence ID" value="AAC22300.1"/>
    <property type="molecule type" value="Genomic_DNA"/>
</dbReference>
<dbReference type="PIR" id="E64083">
    <property type="entry name" value="E64083"/>
</dbReference>
<dbReference type="RefSeq" id="NP_438800.1">
    <property type="nucleotide sequence ID" value="NC_000907.1"/>
</dbReference>
<dbReference type="SMR" id="P44350"/>
<dbReference type="STRING" id="71421.HI_0640"/>
<dbReference type="EnsemblBacteria" id="AAC22300">
    <property type="protein sequence ID" value="AAC22300"/>
    <property type="gene ID" value="HI_0640"/>
</dbReference>
<dbReference type="KEGG" id="hin:HI_0640"/>
<dbReference type="PATRIC" id="fig|71421.8.peg.668"/>
<dbReference type="eggNOG" id="COG0244">
    <property type="taxonomic scope" value="Bacteria"/>
</dbReference>
<dbReference type="HOGENOM" id="CLU_092227_0_2_6"/>
<dbReference type="OrthoDB" id="9808307at2"/>
<dbReference type="PhylomeDB" id="P44350"/>
<dbReference type="BioCyc" id="HINF71421:G1GJ1-671-MONOMER"/>
<dbReference type="Proteomes" id="UP000000579">
    <property type="component" value="Chromosome"/>
</dbReference>
<dbReference type="GO" id="GO:0022625">
    <property type="term" value="C:cytosolic large ribosomal subunit"/>
    <property type="evidence" value="ECO:0000318"/>
    <property type="project" value="GO_Central"/>
</dbReference>
<dbReference type="GO" id="GO:0070180">
    <property type="term" value="F:large ribosomal subunit rRNA binding"/>
    <property type="evidence" value="ECO:0007669"/>
    <property type="project" value="UniProtKB-UniRule"/>
</dbReference>
<dbReference type="GO" id="GO:0003735">
    <property type="term" value="F:structural constituent of ribosome"/>
    <property type="evidence" value="ECO:0000318"/>
    <property type="project" value="GO_Central"/>
</dbReference>
<dbReference type="GO" id="GO:0006412">
    <property type="term" value="P:translation"/>
    <property type="evidence" value="ECO:0000318"/>
    <property type="project" value="GO_Central"/>
</dbReference>
<dbReference type="CDD" id="cd05797">
    <property type="entry name" value="Ribosomal_L10"/>
    <property type="match status" value="1"/>
</dbReference>
<dbReference type="FunFam" id="3.30.70.1730:FF:000001">
    <property type="entry name" value="50S ribosomal protein L10"/>
    <property type="match status" value="1"/>
</dbReference>
<dbReference type="Gene3D" id="3.30.70.1730">
    <property type="match status" value="1"/>
</dbReference>
<dbReference type="Gene3D" id="6.10.250.2350">
    <property type="match status" value="1"/>
</dbReference>
<dbReference type="HAMAP" id="MF_00362">
    <property type="entry name" value="Ribosomal_uL10"/>
    <property type="match status" value="1"/>
</dbReference>
<dbReference type="InterPro" id="IPR001790">
    <property type="entry name" value="Ribosomal_uL10"/>
</dbReference>
<dbReference type="InterPro" id="IPR043141">
    <property type="entry name" value="Ribosomal_uL10-like_sf"/>
</dbReference>
<dbReference type="InterPro" id="IPR022973">
    <property type="entry name" value="Ribosomal_uL10_bac"/>
</dbReference>
<dbReference type="InterPro" id="IPR047865">
    <property type="entry name" value="Ribosomal_uL10_bac_type"/>
</dbReference>
<dbReference type="InterPro" id="IPR002363">
    <property type="entry name" value="Ribosomal_uL10_CS_bac"/>
</dbReference>
<dbReference type="NCBIfam" id="NF000955">
    <property type="entry name" value="PRK00099.1-1"/>
    <property type="match status" value="1"/>
</dbReference>
<dbReference type="PANTHER" id="PTHR11560">
    <property type="entry name" value="39S RIBOSOMAL PROTEIN L10, MITOCHONDRIAL"/>
    <property type="match status" value="1"/>
</dbReference>
<dbReference type="Pfam" id="PF00466">
    <property type="entry name" value="Ribosomal_L10"/>
    <property type="match status" value="1"/>
</dbReference>
<dbReference type="SUPFAM" id="SSF160369">
    <property type="entry name" value="Ribosomal protein L10-like"/>
    <property type="match status" value="1"/>
</dbReference>
<dbReference type="PROSITE" id="PS01109">
    <property type="entry name" value="RIBOSOMAL_L10"/>
    <property type="match status" value="1"/>
</dbReference>
<name>RL10_HAEIN</name>
<protein>
    <recommendedName>
        <fullName evidence="3">Large ribosomal subunit protein uL10</fullName>
    </recommendedName>
    <alternativeName>
        <fullName>50S ribosomal protein L10</fullName>
    </alternativeName>
</protein>
<reference key="1">
    <citation type="journal article" date="1995" name="Science">
        <title>Whole-genome random sequencing and assembly of Haemophilus influenzae Rd.</title>
        <authorList>
            <person name="Fleischmann R.D."/>
            <person name="Adams M.D."/>
            <person name="White O."/>
            <person name="Clayton R.A."/>
            <person name="Kirkness E.F."/>
            <person name="Kerlavage A.R."/>
            <person name="Bult C.J."/>
            <person name="Tomb J.-F."/>
            <person name="Dougherty B.A."/>
            <person name="Merrick J.M."/>
            <person name="McKenney K."/>
            <person name="Sutton G.G."/>
            <person name="FitzHugh W."/>
            <person name="Fields C.A."/>
            <person name="Gocayne J.D."/>
            <person name="Scott J.D."/>
            <person name="Shirley R."/>
            <person name="Liu L.-I."/>
            <person name="Glodek A."/>
            <person name="Kelley J.M."/>
            <person name="Weidman J.F."/>
            <person name="Phillips C.A."/>
            <person name="Spriggs T."/>
            <person name="Hedblom E."/>
            <person name="Cotton M.D."/>
            <person name="Utterback T.R."/>
            <person name="Hanna M.C."/>
            <person name="Nguyen D.T."/>
            <person name="Saudek D.M."/>
            <person name="Brandon R.C."/>
            <person name="Fine L.D."/>
            <person name="Fritchman J.L."/>
            <person name="Fuhrmann J.L."/>
            <person name="Geoghagen N.S.M."/>
            <person name="Gnehm C.L."/>
            <person name="McDonald L.A."/>
            <person name="Small K.V."/>
            <person name="Fraser C.M."/>
            <person name="Smith H.O."/>
            <person name="Venter J.C."/>
        </authorList>
    </citation>
    <scope>NUCLEOTIDE SEQUENCE [LARGE SCALE GENOMIC DNA]</scope>
    <source>
        <strain>ATCC 51907 / DSM 11121 / KW20 / Rd</strain>
    </source>
</reference>
<reference key="2">
    <citation type="journal article" date="2000" name="Electrophoresis">
        <title>Two-dimensional map of the proteome of Haemophilus influenzae.</title>
        <authorList>
            <person name="Langen H."/>
            <person name="Takacs B."/>
            <person name="Evers S."/>
            <person name="Berndt P."/>
            <person name="Lahm H.W."/>
            <person name="Wipf B."/>
            <person name="Gray C."/>
            <person name="Fountoulakis M."/>
        </authorList>
    </citation>
    <scope>PROTEIN SEQUENCE OF 2-8</scope>
    <source>
        <strain>ATCC 51907 / DSM 11121 / KW20 / Rd</strain>
    </source>
</reference>
<organism>
    <name type="scientific">Haemophilus influenzae (strain ATCC 51907 / DSM 11121 / KW20 / Rd)</name>
    <dbReference type="NCBI Taxonomy" id="71421"/>
    <lineage>
        <taxon>Bacteria</taxon>
        <taxon>Pseudomonadati</taxon>
        <taxon>Pseudomonadota</taxon>
        <taxon>Gammaproteobacteria</taxon>
        <taxon>Pasteurellales</taxon>
        <taxon>Pasteurellaceae</taxon>
        <taxon>Haemophilus</taxon>
    </lineage>
</organism>
<comment type="function">
    <text evidence="1">Forms part of the ribosomal stalk, playing a central role in the interaction of the ribosome with GTP-bound translation factors.</text>
</comment>
<comment type="subunit">
    <text evidence="1">Part of the ribosomal stalk of the 50S ribosomal subunit. The N-terminus interacts with L11 and the large rRNA to form the base of the stalk. The C-terminus forms an elongated spine to which L12 dimers bind in a sequential fashion forming a multimeric L10(L12)X complex (By similarity).</text>
</comment>
<comment type="similarity">
    <text evidence="3">Belongs to the universal ribosomal protein uL10 family.</text>
</comment>
<feature type="initiator methionine" description="Removed" evidence="2">
    <location>
        <position position="1"/>
    </location>
</feature>
<feature type="chain" id="PRO_0000154639" description="Large ribosomal subunit protein uL10">
    <location>
        <begin position="2"/>
        <end position="163"/>
    </location>
</feature>
<gene>
    <name type="primary">rplJ</name>
    <name type="synonym">rpl10</name>
    <name type="ordered locus">HI_0640</name>
</gene>
<keyword id="KW-0903">Direct protein sequencing</keyword>
<keyword id="KW-1185">Reference proteome</keyword>
<keyword id="KW-0687">Ribonucleoprotein</keyword>
<keyword id="KW-0689">Ribosomal protein</keyword>
<keyword id="KW-0694">RNA-binding</keyword>
<keyword id="KW-0699">rRNA-binding</keyword>